<keyword id="KW-1185">Reference proteome</keyword>
<keyword id="KW-0687">Ribonucleoprotein</keyword>
<keyword id="KW-0689">Ribosomal protein</keyword>
<keyword id="KW-0694">RNA-binding</keyword>
<keyword id="KW-0699">rRNA-binding</keyword>
<comment type="function">
    <text evidence="1">One of the primary rRNA binding proteins, it binds directly to 16S rRNA central domain where it helps coordinate assembly of the platform of the 30S subunit.</text>
</comment>
<comment type="subunit">
    <text evidence="1">Part of the 30S ribosomal subunit. Contacts proteins S5 and S12.</text>
</comment>
<comment type="similarity">
    <text evidence="1">Belongs to the universal ribosomal protein uS8 family.</text>
</comment>
<gene>
    <name evidence="1" type="primary">rpsH</name>
    <name type="ordered locus">VF_0251</name>
</gene>
<organism>
    <name type="scientific">Aliivibrio fischeri (strain ATCC 700601 / ES114)</name>
    <name type="common">Vibrio fischeri</name>
    <dbReference type="NCBI Taxonomy" id="312309"/>
    <lineage>
        <taxon>Bacteria</taxon>
        <taxon>Pseudomonadati</taxon>
        <taxon>Pseudomonadota</taxon>
        <taxon>Gammaproteobacteria</taxon>
        <taxon>Vibrionales</taxon>
        <taxon>Vibrionaceae</taxon>
        <taxon>Aliivibrio</taxon>
    </lineage>
</organism>
<dbReference type="EMBL" id="CP000020">
    <property type="protein sequence ID" value="AAW84746.1"/>
    <property type="molecule type" value="Genomic_DNA"/>
</dbReference>
<dbReference type="RefSeq" id="WP_011261080.1">
    <property type="nucleotide sequence ID" value="NC_006840.2"/>
</dbReference>
<dbReference type="RefSeq" id="YP_203634.1">
    <property type="nucleotide sequence ID" value="NC_006840.2"/>
</dbReference>
<dbReference type="SMR" id="Q5E8A0"/>
<dbReference type="STRING" id="312309.VF_0251"/>
<dbReference type="EnsemblBacteria" id="AAW84746">
    <property type="protein sequence ID" value="AAW84746"/>
    <property type="gene ID" value="VF_0251"/>
</dbReference>
<dbReference type="GeneID" id="54162872"/>
<dbReference type="KEGG" id="vfi:VF_0251"/>
<dbReference type="PATRIC" id="fig|312309.11.peg.246"/>
<dbReference type="eggNOG" id="COG0096">
    <property type="taxonomic scope" value="Bacteria"/>
</dbReference>
<dbReference type="HOGENOM" id="CLU_098428_0_0_6"/>
<dbReference type="OrthoDB" id="9802617at2"/>
<dbReference type="Proteomes" id="UP000000537">
    <property type="component" value="Chromosome I"/>
</dbReference>
<dbReference type="GO" id="GO:1990904">
    <property type="term" value="C:ribonucleoprotein complex"/>
    <property type="evidence" value="ECO:0007669"/>
    <property type="project" value="UniProtKB-KW"/>
</dbReference>
<dbReference type="GO" id="GO:0005840">
    <property type="term" value="C:ribosome"/>
    <property type="evidence" value="ECO:0007669"/>
    <property type="project" value="UniProtKB-KW"/>
</dbReference>
<dbReference type="GO" id="GO:0019843">
    <property type="term" value="F:rRNA binding"/>
    <property type="evidence" value="ECO:0007669"/>
    <property type="project" value="UniProtKB-UniRule"/>
</dbReference>
<dbReference type="GO" id="GO:0003735">
    <property type="term" value="F:structural constituent of ribosome"/>
    <property type="evidence" value="ECO:0007669"/>
    <property type="project" value="InterPro"/>
</dbReference>
<dbReference type="GO" id="GO:0006412">
    <property type="term" value="P:translation"/>
    <property type="evidence" value="ECO:0007669"/>
    <property type="project" value="UniProtKB-UniRule"/>
</dbReference>
<dbReference type="FunFam" id="3.30.1370.30:FF:000003">
    <property type="entry name" value="30S ribosomal protein S8"/>
    <property type="match status" value="1"/>
</dbReference>
<dbReference type="FunFam" id="3.30.1490.10:FF:000001">
    <property type="entry name" value="30S ribosomal protein S8"/>
    <property type="match status" value="1"/>
</dbReference>
<dbReference type="Gene3D" id="3.30.1370.30">
    <property type="match status" value="1"/>
</dbReference>
<dbReference type="Gene3D" id="3.30.1490.10">
    <property type="match status" value="1"/>
</dbReference>
<dbReference type="HAMAP" id="MF_01302_B">
    <property type="entry name" value="Ribosomal_uS8_B"/>
    <property type="match status" value="1"/>
</dbReference>
<dbReference type="InterPro" id="IPR000630">
    <property type="entry name" value="Ribosomal_uS8"/>
</dbReference>
<dbReference type="InterPro" id="IPR047863">
    <property type="entry name" value="Ribosomal_uS8_CS"/>
</dbReference>
<dbReference type="InterPro" id="IPR035987">
    <property type="entry name" value="Ribosomal_uS8_sf"/>
</dbReference>
<dbReference type="NCBIfam" id="NF001109">
    <property type="entry name" value="PRK00136.1"/>
    <property type="match status" value="1"/>
</dbReference>
<dbReference type="PANTHER" id="PTHR11758">
    <property type="entry name" value="40S RIBOSOMAL PROTEIN S15A"/>
    <property type="match status" value="1"/>
</dbReference>
<dbReference type="Pfam" id="PF00410">
    <property type="entry name" value="Ribosomal_S8"/>
    <property type="match status" value="1"/>
</dbReference>
<dbReference type="SUPFAM" id="SSF56047">
    <property type="entry name" value="Ribosomal protein S8"/>
    <property type="match status" value="1"/>
</dbReference>
<dbReference type="PROSITE" id="PS00053">
    <property type="entry name" value="RIBOSOMAL_S8"/>
    <property type="match status" value="1"/>
</dbReference>
<protein>
    <recommendedName>
        <fullName evidence="1">Small ribosomal subunit protein uS8</fullName>
    </recommendedName>
    <alternativeName>
        <fullName evidence="2">30S ribosomal protein S8</fullName>
    </alternativeName>
</protein>
<sequence>MSMQDPISDMLTRVRNGQAANKVAVKMPSSKLKVAIAALLKAEGYIADFAVEGDIKPELEITLKYFQAKPVIEQIQRVSRPGLRVYKKNDALPSVMGGLGIAVVSTSKGLMSDRAARKAGLGGEIICYVA</sequence>
<evidence type="ECO:0000255" key="1">
    <source>
        <dbReference type="HAMAP-Rule" id="MF_01302"/>
    </source>
</evidence>
<evidence type="ECO:0000305" key="2"/>
<name>RS8_ALIF1</name>
<proteinExistence type="inferred from homology"/>
<reference key="1">
    <citation type="journal article" date="2005" name="Proc. Natl. Acad. Sci. U.S.A.">
        <title>Complete genome sequence of Vibrio fischeri: a symbiotic bacterium with pathogenic congeners.</title>
        <authorList>
            <person name="Ruby E.G."/>
            <person name="Urbanowski M."/>
            <person name="Campbell J."/>
            <person name="Dunn A."/>
            <person name="Faini M."/>
            <person name="Gunsalus R."/>
            <person name="Lostroh P."/>
            <person name="Lupp C."/>
            <person name="McCann J."/>
            <person name="Millikan D."/>
            <person name="Schaefer A."/>
            <person name="Stabb E."/>
            <person name="Stevens A."/>
            <person name="Visick K."/>
            <person name="Whistler C."/>
            <person name="Greenberg E.P."/>
        </authorList>
    </citation>
    <scope>NUCLEOTIDE SEQUENCE [LARGE SCALE GENOMIC DNA]</scope>
    <source>
        <strain>ATCC 700601 / ES114</strain>
    </source>
</reference>
<feature type="chain" id="PRO_0000126520" description="Small ribosomal subunit protein uS8">
    <location>
        <begin position="1"/>
        <end position="130"/>
    </location>
</feature>
<accession>Q5E8A0</accession>